<comment type="subcellular location">
    <subcellularLocation>
        <location>Secreted</location>
    </subcellularLocation>
</comment>
<comment type="developmental stage">
    <text>Expressed in five or six cells (per hemisphere) in the frontal area of the brain in day 4 fifth instar larvae.</text>
</comment>
<comment type="similarity">
    <text evidence="3">Belongs to the arthropod CHH/MIH/GIH/VIH hormone family.</text>
</comment>
<feature type="signal peptide" evidence="2">
    <location>
        <begin position="1"/>
        <end position="23"/>
    </location>
</feature>
<feature type="propeptide" id="PRO_0000019090" evidence="2">
    <location>
        <begin position="24"/>
        <end position="35"/>
    </location>
</feature>
<feature type="peptide" id="PRO_0000019091" description="CHH-like protein">
    <location>
        <begin position="36"/>
        <end position="107"/>
    </location>
</feature>
<feature type="modified residue" description="Valine amide" evidence="2">
    <location>
        <position position="107"/>
    </location>
</feature>
<feature type="disulfide bond" evidence="1">
    <location>
        <begin position="42"/>
        <end position="78"/>
    </location>
</feature>
<feature type="disulfide bond" evidence="1">
    <location>
        <begin position="58"/>
        <end position="74"/>
    </location>
</feature>
<feature type="disulfide bond" evidence="1">
    <location>
        <begin position="61"/>
        <end position="87"/>
    </location>
</feature>
<accession>Q9NL55</accession>
<gene>
    <name type="primary">CHHL</name>
</gene>
<organism>
    <name type="scientific">Bombyx mori</name>
    <name type="common">Silk moth</name>
    <dbReference type="NCBI Taxonomy" id="7091"/>
    <lineage>
        <taxon>Eukaryota</taxon>
        <taxon>Metazoa</taxon>
        <taxon>Ecdysozoa</taxon>
        <taxon>Arthropoda</taxon>
        <taxon>Hexapoda</taxon>
        <taxon>Insecta</taxon>
        <taxon>Pterygota</taxon>
        <taxon>Neoptera</taxon>
        <taxon>Endopterygota</taxon>
        <taxon>Lepidoptera</taxon>
        <taxon>Glossata</taxon>
        <taxon>Ditrysia</taxon>
        <taxon>Bombycoidea</taxon>
        <taxon>Bombycidae</taxon>
        <taxon>Bombycinae</taxon>
        <taxon>Bombyx</taxon>
    </lineage>
</organism>
<evidence type="ECO:0000250" key="1"/>
<evidence type="ECO:0000255" key="2"/>
<evidence type="ECO:0000305" key="3"/>
<protein>
    <recommendedName>
        <fullName>CHH-like protein</fullName>
    </recommendedName>
    <alternativeName>
        <fullName>BmCHHL</fullName>
    </alternativeName>
</protein>
<dbReference type="EMBL" id="AB031074">
    <property type="protein sequence ID" value="BAA90831.1"/>
    <property type="molecule type" value="mRNA"/>
</dbReference>
<dbReference type="RefSeq" id="NP_001106139.1">
    <property type="nucleotide sequence ID" value="NM_001112669.1"/>
</dbReference>
<dbReference type="RefSeq" id="XP_012544169.1">
    <property type="nucleotide sequence ID" value="XM_012688715.1"/>
</dbReference>
<dbReference type="SMR" id="Q9NL55"/>
<dbReference type="FunCoup" id="Q9NL55">
    <property type="interactions" value="43"/>
</dbReference>
<dbReference type="STRING" id="7091.Q9NL55"/>
<dbReference type="PaxDb" id="7091-BGIBMGA004168-TA"/>
<dbReference type="EnsemblMetazoa" id="NM_001112669.1">
    <property type="protein sequence ID" value="NP_001106139.1"/>
    <property type="gene ID" value="GeneID_100127118"/>
</dbReference>
<dbReference type="EnsemblMetazoa" id="XM_038017445.1">
    <property type="protein sequence ID" value="XP_037873373.1"/>
    <property type="gene ID" value="GeneID_100127118"/>
</dbReference>
<dbReference type="GeneID" id="100127118"/>
<dbReference type="KEGG" id="bmor:100127118"/>
<dbReference type="CTD" id="37921"/>
<dbReference type="eggNOG" id="ENOG502S3WA">
    <property type="taxonomic scope" value="Eukaryota"/>
</dbReference>
<dbReference type="HOGENOM" id="CLU_147120_1_0_1"/>
<dbReference type="InParanoid" id="Q9NL55"/>
<dbReference type="OMA" id="GCLGDYD"/>
<dbReference type="Proteomes" id="UP000005204">
    <property type="component" value="Unassembled WGS sequence"/>
</dbReference>
<dbReference type="GO" id="GO:0005576">
    <property type="term" value="C:extracellular region"/>
    <property type="evidence" value="ECO:0007669"/>
    <property type="project" value="UniProtKB-SubCell"/>
</dbReference>
<dbReference type="GO" id="GO:0005184">
    <property type="term" value="F:neuropeptide hormone activity"/>
    <property type="evidence" value="ECO:0007669"/>
    <property type="project" value="InterPro"/>
</dbReference>
<dbReference type="GO" id="GO:0007623">
    <property type="term" value="P:circadian rhythm"/>
    <property type="evidence" value="ECO:0007669"/>
    <property type="project" value="TreeGrafter"/>
</dbReference>
<dbReference type="GO" id="GO:0007218">
    <property type="term" value="P:neuropeptide signaling pathway"/>
    <property type="evidence" value="ECO:0007669"/>
    <property type="project" value="UniProtKB-KW"/>
</dbReference>
<dbReference type="FunFam" id="1.10.2010.10:FF:000001">
    <property type="entry name" value="Ion transport peptide isoform C"/>
    <property type="match status" value="1"/>
</dbReference>
<dbReference type="Gene3D" id="1.10.2010.10">
    <property type="entry name" value="Crustacean CHH/MIH/GIH neurohormone"/>
    <property type="match status" value="1"/>
</dbReference>
<dbReference type="InterPro" id="IPR018251">
    <property type="entry name" value="Crust_neurhormone_CS"/>
</dbReference>
<dbReference type="InterPro" id="IPR031098">
    <property type="entry name" value="Crust_neurohorm"/>
</dbReference>
<dbReference type="InterPro" id="IPR035957">
    <property type="entry name" value="Crust_neurohorm_sf"/>
</dbReference>
<dbReference type="InterPro" id="IPR001166">
    <property type="entry name" value="Hyperglycemic"/>
</dbReference>
<dbReference type="PANTHER" id="PTHR35981">
    <property type="entry name" value="ION TRANSPORT PEPTIDE, ISOFORM C"/>
    <property type="match status" value="1"/>
</dbReference>
<dbReference type="PANTHER" id="PTHR35981:SF2">
    <property type="entry name" value="ION TRANSPORT PEPTIDE, ISOFORM C"/>
    <property type="match status" value="1"/>
</dbReference>
<dbReference type="Pfam" id="PF01147">
    <property type="entry name" value="Crust_neurohorm"/>
    <property type="match status" value="1"/>
</dbReference>
<dbReference type="PRINTS" id="PR00550">
    <property type="entry name" value="HYPRGLYCEMIC"/>
</dbReference>
<dbReference type="SUPFAM" id="SSF81778">
    <property type="entry name" value="Crustacean CHH/MIH/GIH neurohormone"/>
    <property type="match status" value="1"/>
</dbReference>
<dbReference type="PROSITE" id="PS01250">
    <property type="entry name" value="CHH_MIH_GIH"/>
    <property type="match status" value="1"/>
</dbReference>
<sequence>MHLSSVQFAWAALVALAVSAAGALPSSAPHHVERRSFFTLECKGVFDAAIFARLDRICDDCFNLFREPQLYTLCRAECFTTPYFKGCMESLYLYDEKEQIDQMIDFVGKR</sequence>
<proteinExistence type="evidence at transcript level"/>
<keyword id="KW-0027">Amidation</keyword>
<keyword id="KW-0165">Cleavage on pair of basic residues</keyword>
<keyword id="KW-1015">Disulfide bond</keyword>
<keyword id="KW-0372">Hormone</keyword>
<keyword id="KW-0527">Neuropeptide</keyword>
<keyword id="KW-1185">Reference proteome</keyword>
<keyword id="KW-0964">Secreted</keyword>
<keyword id="KW-0732">Signal</keyword>
<reference key="1">
    <citation type="journal article" date="2000" name="Insect Biochem. Mol. Biol.">
        <title>Isolation of a cDNA encoding a CHH-family peptide from the silkworm Bombyx mori.</title>
        <authorList>
            <person name="Endo H."/>
            <person name="Nagasawa H."/>
            <person name="Watanabe T."/>
        </authorList>
    </citation>
    <scope>NUCLEOTIDE SEQUENCE [MRNA]</scope>
    <source>
        <tissue>Brain</tissue>
    </source>
</reference>
<name>CHHL_BOMMO</name>